<accession>Q8BYY4</accession>
<accession>B2RX73</accession>
<accession>Q3V168</accession>
<accession>Q8BX40</accession>
<accession>Q9D8N8</accession>
<proteinExistence type="evidence at protein level"/>
<dbReference type="EMBL" id="AK007856">
    <property type="protein sequence ID" value="BAB25308.1"/>
    <property type="molecule type" value="mRNA"/>
</dbReference>
<dbReference type="EMBL" id="AK037208">
    <property type="protein sequence ID" value="BAC29754.1"/>
    <property type="molecule type" value="mRNA"/>
</dbReference>
<dbReference type="EMBL" id="AK049108">
    <property type="protein sequence ID" value="BAC33545.1"/>
    <property type="molecule type" value="mRNA"/>
</dbReference>
<dbReference type="EMBL" id="AK132655">
    <property type="protein sequence ID" value="BAE21284.1"/>
    <property type="molecule type" value="mRNA"/>
</dbReference>
<dbReference type="EMBL" id="BX571885">
    <property type="status" value="NOT_ANNOTATED_CDS"/>
    <property type="molecule type" value="Genomic_DNA"/>
</dbReference>
<dbReference type="EMBL" id="CH466527">
    <property type="protein sequence ID" value="EDL31029.1"/>
    <property type="molecule type" value="Genomic_DNA"/>
</dbReference>
<dbReference type="EMBL" id="BC151021">
    <property type="protein sequence ID" value="AAI51022.1"/>
    <property type="molecule type" value="mRNA"/>
</dbReference>
<dbReference type="CCDS" id="CCDS18297.1">
    <molecule id="Q8BYY4-1"/>
</dbReference>
<dbReference type="RefSeq" id="NP_081514.1">
    <molecule id="Q8BYY4-1"/>
    <property type="nucleotide sequence ID" value="NM_027238.2"/>
</dbReference>
<dbReference type="BioGRID" id="213723">
    <property type="interactions" value="2"/>
</dbReference>
<dbReference type="FunCoup" id="Q8BYY4">
    <property type="interactions" value="55"/>
</dbReference>
<dbReference type="STRING" id="10090.ENSMUSP00000099887"/>
<dbReference type="iPTMnet" id="Q8BYY4"/>
<dbReference type="PhosphoSitePlus" id="Q8BYY4"/>
<dbReference type="SwissPalm" id="Q8BYY4"/>
<dbReference type="jPOST" id="Q8BYY4"/>
<dbReference type="PaxDb" id="10090-ENSMUSP00000099887"/>
<dbReference type="PeptideAtlas" id="Q8BYY4"/>
<dbReference type="ProteomicsDB" id="297735">
    <molecule id="Q8BYY4-1"/>
</dbReference>
<dbReference type="ProteomicsDB" id="297736">
    <molecule id="Q8BYY4-2"/>
</dbReference>
<dbReference type="ProteomicsDB" id="297737">
    <molecule id="Q8BYY4-3"/>
</dbReference>
<dbReference type="Pumba" id="Q8BYY4"/>
<dbReference type="Antibodypedia" id="24508">
    <property type="antibodies" value="99 antibodies from 22 providers"/>
</dbReference>
<dbReference type="DNASU" id="69863"/>
<dbReference type="Ensembl" id="ENSMUST00000030205.14">
    <molecule id="Q8BYY4-3"/>
    <property type="protein sequence ID" value="ENSMUSP00000030205.8"/>
    <property type="gene ID" value="ENSMUSG00000038172.15"/>
</dbReference>
<dbReference type="Ensembl" id="ENSMUST00000048274.11">
    <molecule id="Q8BYY4-2"/>
    <property type="protein sequence ID" value="ENSMUSP00000040590.5"/>
    <property type="gene ID" value="ENSMUSG00000038172.15"/>
</dbReference>
<dbReference type="Ensembl" id="ENSMUST00000102823.10">
    <molecule id="Q8BYY4-1"/>
    <property type="protein sequence ID" value="ENSMUSP00000099887.4"/>
    <property type="gene ID" value="ENSMUSG00000038172.15"/>
</dbReference>
<dbReference type="GeneID" id="69863"/>
<dbReference type="KEGG" id="mmu:69863"/>
<dbReference type="UCSC" id="uc008tkq.1">
    <molecule id="Q8BYY4-1"/>
    <property type="organism name" value="mouse"/>
</dbReference>
<dbReference type="UCSC" id="uc008tkr.1">
    <molecule id="Q8BYY4-2"/>
    <property type="organism name" value="mouse"/>
</dbReference>
<dbReference type="UCSC" id="uc008tks.1">
    <molecule id="Q8BYY4-3"/>
    <property type="organism name" value="mouse"/>
</dbReference>
<dbReference type="AGR" id="MGI:1917113"/>
<dbReference type="CTD" id="158219"/>
<dbReference type="MGI" id="MGI:1917113">
    <property type="gene designation" value="Ttc39b"/>
</dbReference>
<dbReference type="VEuPathDB" id="HostDB:ENSMUSG00000038172"/>
<dbReference type="eggNOG" id="KOG3783">
    <property type="taxonomic scope" value="Eukaryota"/>
</dbReference>
<dbReference type="GeneTree" id="ENSGT00950000182917"/>
<dbReference type="HOGENOM" id="CLU_010086_3_0_1"/>
<dbReference type="InParanoid" id="Q8BYY4"/>
<dbReference type="OMA" id="ELMWAHC"/>
<dbReference type="OrthoDB" id="43460at2759"/>
<dbReference type="PhylomeDB" id="Q8BYY4"/>
<dbReference type="TreeFam" id="TF313761"/>
<dbReference type="BioGRID-ORCS" id="69863">
    <property type="hits" value="5 hits in 77 CRISPR screens"/>
</dbReference>
<dbReference type="ChiTaRS" id="Ttc39b">
    <property type="organism name" value="mouse"/>
</dbReference>
<dbReference type="PRO" id="PR:Q8BYY4"/>
<dbReference type="Proteomes" id="UP000000589">
    <property type="component" value="Chromosome 4"/>
</dbReference>
<dbReference type="RNAct" id="Q8BYY4">
    <property type="molecule type" value="protein"/>
</dbReference>
<dbReference type="Bgee" id="ENSMUSG00000038172">
    <property type="expression patterns" value="Expressed in spermatocyte and 205 other cell types or tissues"/>
</dbReference>
<dbReference type="ExpressionAtlas" id="Q8BYY4">
    <property type="expression patterns" value="baseline and differential"/>
</dbReference>
<dbReference type="GO" id="GO:0042632">
    <property type="term" value="P:cholesterol homeostasis"/>
    <property type="evidence" value="ECO:0000315"/>
    <property type="project" value="UniProtKB"/>
</dbReference>
<dbReference type="GO" id="GO:0006629">
    <property type="term" value="P:lipid metabolic process"/>
    <property type="evidence" value="ECO:0007669"/>
    <property type="project" value="UniProtKB-KW"/>
</dbReference>
<dbReference type="GO" id="GO:0010887">
    <property type="term" value="P:negative regulation of cholesterol storage"/>
    <property type="evidence" value="ECO:0000315"/>
    <property type="project" value="UniProtKB"/>
</dbReference>
<dbReference type="GO" id="GO:0010874">
    <property type="term" value="P:regulation of cholesterol efflux"/>
    <property type="evidence" value="ECO:0000315"/>
    <property type="project" value="UniProtKB"/>
</dbReference>
<dbReference type="GO" id="GO:0090181">
    <property type="term" value="P:regulation of cholesterol metabolic process"/>
    <property type="evidence" value="ECO:0000315"/>
    <property type="project" value="UniProtKB"/>
</dbReference>
<dbReference type="Gene3D" id="1.25.40.10">
    <property type="entry name" value="Tetratricopeptide repeat domain"/>
    <property type="match status" value="1"/>
</dbReference>
<dbReference type="InterPro" id="IPR019412">
    <property type="entry name" value="Iml2/TPR_39"/>
</dbReference>
<dbReference type="InterPro" id="IPR011990">
    <property type="entry name" value="TPR-like_helical_dom_sf"/>
</dbReference>
<dbReference type="InterPro" id="IPR019734">
    <property type="entry name" value="TPR_rpt"/>
</dbReference>
<dbReference type="PANTHER" id="PTHR31859">
    <property type="entry name" value="TETRATRICOPEPTIDE REPEAT PROTEIN 39 FAMILY MEMBER"/>
    <property type="match status" value="1"/>
</dbReference>
<dbReference type="PANTHER" id="PTHR31859:SF4">
    <property type="entry name" value="TETRATRICOPEPTIDE REPEAT PROTEIN 39B"/>
    <property type="match status" value="1"/>
</dbReference>
<dbReference type="Pfam" id="PF10300">
    <property type="entry name" value="Iml2-TPR_39"/>
    <property type="match status" value="1"/>
</dbReference>
<dbReference type="Pfam" id="PF13174">
    <property type="entry name" value="TPR_6"/>
    <property type="match status" value="1"/>
</dbReference>
<dbReference type="SUPFAM" id="SSF48452">
    <property type="entry name" value="TPR-like"/>
    <property type="match status" value="1"/>
</dbReference>
<feature type="chain" id="PRO_0000292002" description="Tetratricopeptide repeat protein 39B">
    <location>
        <begin position="1"/>
        <end position="617"/>
    </location>
</feature>
<feature type="repeat" description="TPR 1">
    <location>
        <begin position="328"/>
        <end position="361"/>
    </location>
</feature>
<feature type="repeat" description="TPR 2">
    <location>
        <begin position="520"/>
        <end position="553"/>
    </location>
</feature>
<feature type="repeat" description="TPR 3">
    <location>
        <begin position="561"/>
        <end position="594"/>
    </location>
</feature>
<feature type="splice variant" id="VSP_026359" description="In isoform 3." evidence="2">
    <original>EMHAEICYAECLLQKAALTFVQDENMINFIKGGLKIRTSYQIY</original>
    <variation>TDLRASLRTRAGTGRPKVFPRQSMRLNWPQYDLHCLFLPGNPM</variation>
    <location>
        <begin position="167"/>
        <end position="209"/>
    </location>
</feature>
<feature type="splice variant" id="VSP_026360" description="In isoform 3." evidence="2">
    <location>
        <begin position="210"/>
        <end position="617"/>
    </location>
</feature>
<feature type="splice variant" id="VSP_026361" description="In isoform 2." evidence="2">
    <original>EMMYVWNGFSIVGKRKDLSENLLVTVEKAEEALQNQDFTDYSVDD</original>
    <variation>VLLLLTVYLPEIRSLLGASRDALTFACEVYSSVENYYVFLYLYVN</variation>
    <location>
        <begin position="474"/>
        <end position="518"/>
    </location>
</feature>
<feature type="splice variant" id="VSP_026362" description="In isoform 2." evidence="2">
    <location>
        <begin position="519"/>
        <end position="617"/>
    </location>
</feature>
<reference key="1">
    <citation type="journal article" date="2005" name="Science">
        <title>The transcriptional landscape of the mammalian genome.</title>
        <authorList>
            <person name="Carninci P."/>
            <person name="Kasukawa T."/>
            <person name="Katayama S."/>
            <person name="Gough J."/>
            <person name="Frith M.C."/>
            <person name="Maeda N."/>
            <person name="Oyama R."/>
            <person name="Ravasi T."/>
            <person name="Lenhard B."/>
            <person name="Wells C."/>
            <person name="Kodzius R."/>
            <person name="Shimokawa K."/>
            <person name="Bajic V.B."/>
            <person name="Brenner S.E."/>
            <person name="Batalov S."/>
            <person name="Forrest A.R."/>
            <person name="Zavolan M."/>
            <person name="Davis M.J."/>
            <person name="Wilming L.G."/>
            <person name="Aidinis V."/>
            <person name="Allen J.E."/>
            <person name="Ambesi-Impiombato A."/>
            <person name="Apweiler R."/>
            <person name="Aturaliya R.N."/>
            <person name="Bailey T.L."/>
            <person name="Bansal M."/>
            <person name="Baxter L."/>
            <person name="Beisel K.W."/>
            <person name="Bersano T."/>
            <person name="Bono H."/>
            <person name="Chalk A.M."/>
            <person name="Chiu K.P."/>
            <person name="Choudhary V."/>
            <person name="Christoffels A."/>
            <person name="Clutterbuck D.R."/>
            <person name="Crowe M.L."/>
            <person name="Dalla E."/>
            <person name="Dalrymple B.P."/>
            <person name="de Bono B."/>
            <person name="Della Gatta G."/>
            <person name="di Bernardo D."/>
            <person name="Down T."/>
            <person name="Engstrom P."/>
            <person name="Fagiolini M."/>
            <person name="Faulkner G."/>
            <person name="Fletcher C.F."/>
            <person name="Fukushima T."/>
            <person name="Furuno M."/>
            <person name="Futaki S."/>
            <person name="Gariboldi M."/>
            <person name="Georgii-Hemming P."/>
            <person name="Gingeras T.R."/>
            <person name="Gojobori T."/>
            <person name="Green R.E."/>
            <person name="Gustincich S."/>
            <person name="Harbers M."/>
            <person name="Hayashi Y."/>
            <person name="Hensch T.K."/>
            <person name="Hirokawa N."/>
            <person name="Hill D."/>
            <person name="Huminiecki L."/>
            <person name="Iacono M."/>
            <person name="Ikeo K."/>
            <person name="Iwama A."/>
            <person name="Ishikawa T."/>
            <person name="Jakt M."/>
            <person name="Kanapin A."/>
            <person name="Katoh M."/>
            <person name="Kawasawa Y."/>
            <person name="Kelso J."/>
            <person name="Kitamura H."/>
            <person name="Kitano H."/>
            <person name="Kollias G."/>
            <person name="Krishnan S.P."/>
            <person name="Kruger A."/>
            <person name="Kummerfeld S.K."/>
            <person name="Kurochkin I.V."/>
            <person name="Lareau L.F."/>
            <person name="Lazarevic D."/>
            <person name="Lipovich L."/>
            <person name="Liu J."/>
            <person name="Liuni S."/>
            <person name="McWilliam S."/>
            <person name="Madan Babu M."/>
            <person name="Madera M."/>
            <person name="Marchionni L."/>
            <person name="Matsuda H."/>
            <person name="Matsuzawa S."/>
            <person name="Miki H."/>
            <person name="Mignone F."/>
            <person name="Miyake S."/>
            <person name="Morris K."/>
            <person name="Mottagui-Tabar S."/>
            <person name="Mulder N."/>
            <person name="Nakano N."/>
            <person name="Nakauchi H."/>
            <person name="Ng P."/>
            <person name="Nilsson R."/>
            <person name="Nishiguchi S."/>
            <person name="Nishikawa S."/>
            <person name="Nori F."/>
            <person name="Ohara O."/>
            <person name="Okazaki Y."/>
            <person name="Orlando V."/>
            <person name="Pang K.C."/>
            <person name="Pavan W.J."/>
            <person name="Pavesi G."/>
            <person name="Pesole G."/>
            <person name="Petrovsky N."/>
            <person name="Piazza S."/>
            <person name="Reed J."/>
            <person name="Reid J.F."/>
            <person name="Ring B.Z."/>
            <person name="Ringwald M."/>
            <person name="Rost B."/>
            <person name="Ruan Y."/>
            <person name="Salzberg S.L."/>
            <person name="Sandelin A."/>
            <person name="Schneider C."/>
            <person name="Schoenbach C."/>
            <person name="Sekiguchi K."/>
            <person name="Semple C.A."/>
            <person name="Seno S."/>
            <person name="Sessa L."/>
            <person name="Sheng Y."/>
            <person name="Shibata Y."/>
            <person name="Shimada H."/>
            <person name="Shimada K."/>
            <person name="Silva D."/>
            <person name="Sinclair B."/>
            <person name="Sperling S."/>
            <person name="Stupka E."/>
            <person name="Sugiura K."/>
            <person name="Sultana R."/>
            <person name="Takenaka Y."/>
            <person name="Taki K."/>
            <person name="Tammoja K."/>
            <person name="Tan S.L."/>
            <person name="Tang S."/>
            <person name="Taylor M.S."/>
            <person name="Tegner J."/>
            <person name="Teichmann S.A."/>
            <person name="Ueda H.R."/>
            <person name="van Nimwegen E."/>
            <person name="Verardo R."/>
            <person name="Wei C.L."/>
            <person name="Yagi K."/>
            <person name="Yamanishi H."/>
            <person name="Zabarovsky E."/>
            <person name="Zhu S."/>
            <person name="Zimmer A."/>
            <person name="Hide W."/>
            <person name="Bult C."/>
            <person name="Grimmond S.M."/>
            <person name="Teasdale R.D."/>
            <person name="Liu E.T."/>
            <person name="Brusic V."/>
            <person name="Quackenbush J."/>
            <person name="Wahlestedt C."/>
            <person name="Mattick J.S."/>
            <person name="Hume D.A."/>
            <person name="Kai C."/>
            <person name="Sasaki D."/>
            <person name="Tomaru Y."/>
            <person name="Fukuda S."/>
            <person name="Kanamori-Katayama M."/>
            <person name="Suzuki M."/>
            <person name="Aoki J."/>
            <person name="Arakawa T."/>
            <person name="Iida J."/>
            <person name="Imamura K."/>
            <person name="Itoh M."/>
            <person name="Kato T."/>
            <person name="Kawaji H."/>
            <person name="Kawagashira N."/>
            <person name="Kawashima T."/>
            <person name="Kojima M."/>
            <person name="Kondo S."/>
            <person name="Konno H."/>
            <person name="Nakano K."/>
            <person name="Ninomiya N."/>
            <person name="Nishio T."/>
            <person name="Okada M."/>
            <person name="Plessy C."/>
            <person name="Shibata K."/>
            <person name="Shiraki T."/>
            <person name="Suzuki S."/>
            <person name="Tagami M."/>
            <person name="Waki K."/>
            <person name="Watahiki A."/>
            <person name="Okamura-Oho Y."/>
            <person name="Suzuki H."/>
            <person name="Kawai J."/>
            <person name="Hayashizaki Y."/>
        </authorList>
    </citation>
    <scope>NUCLEOTIDE SEQUENCE [LARGE SCALE MRNA] (ISOFORMS 1; 2 AND 3)</scope>
    <source>
        <strain>C57BL/6J</strain>
        <tissue>Embryonic stem cell</tissue>
        <tissue>Pancreas</tissue>
        <tissue>Skin</tissue>
        <tissue>Testis</tissue>
    </source>
</reference>
<reference key="2">
    <citation type="journal article" date="2009" name="PLoS Biol.">
        <title>Lineage-specific biology revealed by a finished genome assembly of the mouse.</title>
        <authorList>
            <person name="Church D.M."/>
            <person name="Goodstadt L."/>
            <person name="Hillier L.W."/>
            <person name="Zody M.C."/>
            <person name="Goldstein S."/>
            <person name="She X."/>
            <person name="Bult C.J."/>
            <person name="Agarwala R."/>
            <person name="Cherry J.L."/>
            <person name="DiCuccio M."/>
            <person name="Hlavina W."/>
            <person name="Kapustin Y."/>
            <person name="Meric P."/>
            <person name="Maglott D."/>
            <person name="Birtle Z."/>
            <person name="Marques A.C."/>
            <person name="Graves T."/>
            <person name="Zhou S."/>
            <person name="Teague B."/>
            <person name="Potamousis K."/>
            <person name="Churas C."/>
            <person name="Place M."/>
            <person name="Herschleb J."/>
            <person name="Runnheim R."/>
            <person name="Forrest D."/>
            <person name="Amos-Landgraf J."/>
            <person name="Schwartz D.C."/>
            <person name="Cheng Z."/>
            <person name="Lindblad-Toh K."/>
            <person name="Eichler E.E."/>
            <person name="Ponting C.P."/>
        </authorList>
    </citation>
    <scope>NUCLEOTIDE SEQUENCE [LARGE SCALE GENOMIC DNA]</scope>
    <source>
        <strain>C57BL/6J</strain>
    </source>
</reference>
<reference key="3">
    <citation type="submission" date="2005-09" db="EMBL/GenBank/DDBJ databases">
        <authorList>
            <person name="Mural R.J."/>
            <person name="Adams M.D."/>
            <person name="Myers E.W."/>
            <person name="Smith H.O."/>
            <person name="Venter J.C."/>
        </authorList>
    </citation>
    <scope>NUCLEOTIDE SEQUENCE [LARGE SCALE GENOMIC DNA]</scope>
</reference>
<reference key="4">
    <citation type="journal article" date="2004" name="Genome Res.">
        <title>The status, quality, and expansion of the NIH full-length cDNA project: the Mammalian Gene Collection (MGC).</title>
        <authorList>
            <consortium name="The MGC Project Team"/>
        </authorList>
    </citation>
    <scope>NUCLEOTIDE SEQUENCE [LARGE SCALE MRNA]</scope>
    <source>
        <tissue>Brain</tissue>
    </source>
</reference>
<reference key="5">
    <citation type="journal article" date="2007" name="Proc. Natl. Acad. Sci. U.S.A.">
        <title>Large-scale phosphorylation analysis of mouse liver.</title>
        <authorList>
            <person name="Villen J."/>
            <person name="Beausoleil S.A."/>
            <person name="Gerber S.A."/>
            <person name="Gygi S.P."/>
        </authorList>
    </citation>
    <scope>IDENTIFICATION BY MASS SPECTROMETRY [LARGE SCALE ANALYSIS]</scope>
    <source>
        <tissue>Liver</tissue>
    </source>
</reference>
<reference key="6">
    <citation type="journal article" date="2010" name="Cell">
        <title>A tissue-specific atlas of mouse protein phosphorylation and expression.</title>
        <authorList>
            <person name="Huttlin E.L."/>
            <person name="Jedrychowski M.P."/>
            <person name="Elias J.E."/>
            <person name="Goswami T."/>
            <person name="Rad R."/>
            <person name="Beausoleil S.A."/>
            <person name="Villen J."/>
            <person name="Haas W."/>
            <person name="Sowa M.E."/>
            <person name="Gygi S.P."/>
        </authorList>
    </citation>
    <scope>IDENTIFICATION BY MASS SPECTROMETRY [LARGE SCALE ANALYSIS]</scope>
    <source>
        <tissue>Brain</tissue>
        <tissue>Liver</tissue>
        <tissue>Pancreas</tissue>
        <tissue>Testis</tissue>
    </source>
</reference>
<reference key="7">
    <citation type="journal article" date="2016" name="Nature">
        <title>TTC39B deficiency stabilizes LXR reducing both atherosclerosis and steatohepatitis.</title>
        <authorList>
            <person name="Hsieh J."/>
            <person name="Koseki M."/>
            <person name="Molusky M.M."/>
            <person name="Yakushiji E."/>
            <person name="Ichi I."/>
            <person name="Westerterp M."/>
            <person name="Iqbal J."/>
            <person name="Chan R.B."/>
            <person name="Abramowicz S."/>
            <person name="Tascau L."/>
            <person name="Takiguchi S."/>
            <person name="Yamashita S."/>
            <person name="Welch C.L."/>
            <person name="Di Paolo G."/>
            <person name="Hussain M.M."/>
            <person name="Lefkowitch J.H."/>
            <person name="Rader D.J."/>
            <person name="Tall A.R."/>
        </authorList>
    </citation>
    <scope>DISRUPTION PHENOTYPE</scope>
    <scope>TISSUE SPECIFICITY</scope>
    <scope>FUNCTION</scope>
</reference>
<gene>
    <name evidence="5" type="primary">Ttc39b</name>
    <name evidence="3" type="synonym">T39</name>
</gene>
<keyword id="KW-0025">Alternative splicing</keyword>
<keyword id="KW-0443">Lipid metabolism</keyword>
<keyword id="KW-1185">Reference proteome</keyword>
<keyword id="KW-0677">Repeat</keyword>
<keyword id="KW-0802">TPR repeat</keyword>
<keyword id="KW-0833">Ubl conjugation pathway</keyword>
<organism>
    <name type="scientific">Mus musculus</name>
    <name type="common">Mouse</name>
    <dbReference type="NCBI Taxonomy" id="10090"/>
    <lineage>
        <taxon>Eukaryota</taxon>
        <taxon>Metazoa</taxon>
        <taxon>Chordata</taxon>
        <taxon>Craniata</taxon>
        <taxon>Vertebrata</taxon>
        <taxon>Euteleostomi</taxon>
        <taxon>Mammalia</taxon>
        <taxon>Eutheria</taxon>
        <taxon>Euarchontoglires</taxon>
        <taxon>Glires</taxon>
        <taxon>Rodentia</taxon>
        <taxon>Myomorpha</taxon>
        <taxon>Muroidea</taxon>
        <taxon>Muridae</taxon>
        <taxon>Murinae</taxon>
        <taxon>Mus</taxon>
        <taxon>Mus</taxon>
    </lineage>
</organism>
<comment type="function">
    <text evidence="1">Regulates high density lipoprotein (HDL) cholesterol metabolism by promoting the ubiquitination and degradation of the oxysterols receptors LXR (NR1H2 and NR1H3).</text>
</comment>
<comment type="alternative products">
    <event type="alternative splicing"/>
    <isoform>
        <id>Q8BYY4-1</id>
        <name>1</name>
        <sequence type="displayed"/>
    </isoform>
    <isoform>
        <id>Q8BYY4-2</id>
        <name>2</name>
        <sequence type="described" ref="VSP_026361 VSP_026362"/>
    </isoform>
    <isoform>
        <id>Q8BYY4-3</id>
        <name>3</name>
        <sequence type="described" ref="VSP_026359 VSP_026360"/>
    </isoform>
</comment>
<comment type="tissue specificity">
    <text evidence="1">High expression in lung and spleen. Low lower expression in liver and small intestine. Weak expression in heart, brain, kidney, adipose, and adrenal gland.</text>
</comment>
<comment type="disruption phenotype">
    <text evidence="1">Chow-fed deficient mice display increased HDL-cholesterol level, accompanied by increased ABCA1 and MYLIP expression, increased oxysterols receptors LXR (NR1H3 and NR1H2) protein level without change in NR1H2/3 mRNA levels. Many NR1H2/3 targets are up-regulated, including ABCG5/8, SCD1, ELOVL5, INSIG2 and LPCAT3. Deficiency of TTC39B reduced processing of SREBP1 a pivotal regulator of lipogenesis. When fed with a high-fat/high-cholesterol/bile-salt diet during 20 weeks, used as a model of steatohepatitis resembling human non-alcoholic steatohepatitis, mice show increased HDL cholesterol and APOA1 levels, reduced VLDL (very low density lipoprotein), and reduced mortality compared with wild-type. The livers of deficient mice shown diminished hepatic triglyceride and cholesteryl ester accumulation, fewer inflammatory foci consisting of neutrophils and lymphocytes, less hepatocellular ballooning degeneration and less hepatocyte proliferation compared to control. Knockout mice lacking both TTC39B and LDLR, fed a Western diet for 20 weeks, exhibit a reduction in LDL-cholesterol, but plasma triglyceride levels are not different. Atherosclerotic lesion area of the aorta are reduced compared to LDLR single knockout mice.</text>
</comment>
<comment type="similarity">
    <text evidence="4">Belongs to the TTC39 family.</text>
</comment>
<evidence type="ECO:0000269" key="1">
    <source>
    </source>
</evidence>
<evidence type="ECO:0000303" key="2">
    <source>
    </source>
</evidence>
<evidence type="ECO:0000303" key="3">
    <source>
    </source>
</evidence>
<evidence type="ECO:0000305" key="4"/>
<evidence type="ECO:0000312" key="5">
    <source>
        <dbReference type="MGI" id="MGI:1917113"/>
    </source>
</evidence>
<name>TT39B_MOUSE</name>
<sequence>MALVGSRVELDADEDIFEDALETISRSPSDMATSGFHFVPCETKRTSRQLGASAMGRPEGSSAKVDLKSGLEECAEALNLFLSNKFKDALELLRPWAKESMYHALGYSTIVVLQAVMTFEQQDIQNGISAMKDALQTCQKYRKKCTVVESFSSLLSRGSLEQLSEEEMHAEICYAECLLQKAALTFVQDENMINFIKGGLKIRTSYQIYKECLSILHVIQKNKQEQHFFYEFEGGVKLGTGAFNLMLSLLPARIIRLLEFIGFSGNRDLGLLQLREGASGSSMRSPLCCLTILAFHTYISLILGTGEVNVVEAESLLAPFLQQFPNGSLILFYHARIELLKGNTEKAQETFRKCISVQEEWKQFHHLCYWELMWIHIYQQNWMQAYYYSDLLCKESKWSKATYVFLKAAILSMLPEEEVAATKENVVSLFRQVDGLKQRIAGKSLPTEKFAVRKARRYSPPSGVPGKLVMPALEMMYVWNGFSIVGKRKDLSENLLVTVEKAEEALQNQDFTDYSVDDECLVKLLKGCCLKNLERPLQAELCFNHVVESEKLLKYDHYLVPFTLFELAFLYKSQGEIDKAIKVLETARNNYKDYSLESRLHFRIQAALHLWKKPSTD</sequence>
<protein>
    <recommendedName>
        <fullName>Tetratricopeptide repeat protein 39B</fullName>
        <shortName>TPR repeat protein 39B</shortName>
    </recommendedName>
</protein>